<gene>
    <name type="ordered locus">BALH_2375</name>
</gene>
<organism>
    <name type="scientific">Bacillus thuringiensis (strain Al Hakam)</name>
    <dbReference type="NCBI Taxonomy" id="412694"/>
    <lineage>
        <taxon>Bacteria</taxon>
        <taxon>Bacillati</taxon>
        <taxon>Bacillota</taxon>
        <taxon>Bacilli</taxon>
        <taxon>Bacillales</taxon>
        <taxon>Bacillaceae</taxon>
        <taxon>Bacillus</taxon>
        <taxon>Bacillus cereus group</taxon>
    </lineage>
</organism>
<evidence type="ECO:0000255" key="1">
    <source>
        <dbReference type="HAMAP-Rule" id="MF_01572"/>
    </source>
</evidence>
<dbReference type="EMBL" id="CP000485">
    <property type="protein sequence ID" value="ABK85668.1"/>
    <property type="molecule type" value="Genomic_DNA"/>
</dbReference>
<dbReference type="RefSeq" id="WP_001038202.1">
    <property type="nucleotide sequence ID" value="NC_008600.1"/>
</dbReference>
<dbReference type="SMR" id="A0REM5"/>
<dbReference type="KEGG" id="btl:BALH_2375"/>
<dbReference type="HOGENOM" id="CLU_120023_0_0_9"/>
<dbReference type="GO" id="GO:0005886">
    <property type="term" value="C:plasma membrane"/>
    <property type="evidence" value="ECO:0007669"/>
    <property type="project" value="UniProtKB-SubCell"/>
</dbReference>
<dbReference type="Gene3D" id="1.10.1760.20">
    <property type="match status" value="1"/>
</dbReference>
<dbReference type="HAMAP" id="MF_01572">
    <property type="entry name" value="UPF0397"/>
    <property type="match status" value="1"/>
</dbReference>
<dbReference type="InterPro" id="IPR009825">
    <property type="entry name" value="ECF_substrate-spec-like"/>
</dbReference>
<dbReference type="InterPro" id="IPR022914">
    <property type="entry name" value="UPF0397"/>
</dbReference>
<dbReference type="NCBIfam" id="NF010182">
    <property type="entry name" value="PRK13661.1"/>
    <property type="match status" value="1"/>
</dbReference>
<dbReference type="PANTHER" id="PTHR37815">
    <property type="entry name" value="UPF0397 PROTEIN BC_2624-RELATED"/>
    <property type="match status" value="1"/>
</dbReference>
<dbReference type="PANTHER" id="PTHR37815:SF3">
    <property type="entry name" value="UPF0397 PROTEIN SPR0429"/>
    <property type="match status" value="1"/>
</dbReference>
<dbReference type="Pfam" id="PF07155">
    <property type="entry name" value="ECF-ribofla_trS"/>
    <property type="match status" value="1"/>
</dbReference>
<name>Y2375_BACAH</name>
<comment type="subcellular location">
    <subcellularLocation>
        <location evidence="1">Cell membrane</location>
        <topology evidence="1">Multi-pass membrane protein</topology>
    </subcellularLocation>
</comment>
<comment type="similarity">
    <text evidence="1">Belongs to the UPF0397 family.</text>
</comment>
<keyword id="KW-1003">Cell membrane</keyword>
<keyword id="KW-0472">Membrane</keyword>
<keyword id="KW-0812">Transmembrane</keyword>
<keyword id="KW-1133">Transmembrane helix</keyword>
<sequence length="182" mass="19105">MNKLSTKLVVAIGIGAALYGILGLWGFSIAPNTFIKPALAILTVFGALFGPVAGLLIGLIGHTVTDTIAGWGIWWGWVISSGIIGFAMGLIQKRVGFSVKNGTYNKGDISYLAITGLIGIVIAIIFAGAFDIIVMGEPFDKIVIQVLGATIADVIVFLVLGLPITIGLAKSNKKHTQLKIEK</sequence>
<reference key="1">
    <citation type="journal article" date="2007" name="J. Bacteriol.">
        <title>The complete genome sequence of Bacillus thuringiensis Al Hakam.</title>
        <authorList>
            <person name="Challacombe J.F."/>
            <person name="Altherr M.R."/>
            <person name="Xie G."/>
            <person name="Bhotika S.S."/>
            <person name="Brown N."/>
            <person name="Bruce D."/>
            <person name="Campbell C.S."/>
            <person name="Campbell M.L."/>
            <person name="Chen J."/>
            <person name="Chertkov O."/>
            <person name="Cleland C."/>
            <person name="Dimitrijevic M."/>
            <person name="Doggett N.A."/>
            <person name="Fawcett J.J."/>
            <person name="Glavina T."/>
            <person name="Goodwin L.A."/>
            <person name="Green L.D."/>
            <person name="Han C.S."/>
            <person name="Hill K.K."/>
            <person name="Hitchcock P."/>
            <person name="Jackson P.J."/>
            <person name="Keim P."/>
            <person name="Kewalramani A.R."/>
            <person name="Longmire J."/>
            <person name="Lucas S."/>
            <person name="Malfatti S."/>
            <person name="Martinez D."/>
            <person name="McMurry K."/>
            <person name="Meincke L.J."/>
            <person name="Misra M."/>
            <person name="Moseman B.L."/>
            <person name="Mundt M."/>
            <person name="Munk A.C."/>
            <person name="Okinaka R.T."/>
            <person name="Parson-Quintana B."/>
            <person name="Reilly L.P."/>
            <person name="Richardson P."/>
            <person name="Robinson D.L."/>
            <person name="Saunders E."/>
            <person name="Tapia R."/>
            <person name="Tesmer J.G."/>
            <person name="Thayer N."/>
            <person name="Thompson L.S."/>
            <person name="Tice H."/>
            <person name="Ticknor L.O."/>
            <person name="Wills P.L."/>
            <person name="Gilna P."/>
            <person name="Brettin T.S."/>
        </authorList>
    </citation>
    <scope>NUCLEOTIDE SEQUENCE [LARGE SCALE GENOMIC DNA]</scope>
    <source>
        <strain>Al Hakam</strain>
    </source>
</reference>
<proteinExistence type="inferred from homology"/>
<protein>
    <recommendedName>
        <fullName evidence="1">UPF0397 protein BALH_2375</fullName>
    </recommendedName>
</protein>
<feature type="chain" id="PRO_1000069197" description="UPF0397 protein BALH_2375">
    <location>
        <begin position="1"/>
        <end position="182"/>
    </location>
</feature>
<feature type="transmembrane region" description="Helical" evidence="1">
    <location>
        <begin position="9"/>
        <end position="29"/>
    </location>
</feature>
<feature type="transmembrane region" description="Helical" evidence="1">
    <location>
        <begin position="40"/>
        <end position="60"/>
    </location>
</feature>
<feature type="transmembrane region" description="Helical" evidence="1">
    <location>
        <begin position="71"/>
        <end position="91"/>
    </location>
</feature>
<feature type="transmembrane region" description="Helical" evidence="1">
    <location>
        <begin position="114"/>
        <end position="134"/>
    </location>
</feature>
<feature type="transmembrane region" description="Helical" evidence="1">
    <location>
        <begin position="142"/>
        <end position="162"/>
    </location>
</feature>
<accession>A0REM5</accession>